<geneLocation type="chloroplast"/>
<proteinExistence type="inferred from homology"/>
<accession>Q9TL02</accession>
<keyword id="KW-0150">Chloroplast</keyword>
<keyword id="KW-0472">Membrane</keyword>
<keyword id="KW-0602">Photosynthesis</keyword>
<keyword id="KW-0934">Plastid</keyword>
<keyword id="KW-0677">Repeat</keyword>
<keyword id="KW-0793">Thylakoid</keyword>
<keyword id="KW-0802">TPR repeat</keyword>
<organism>
    <name type="scientific">Nephroselmis olivacea</name>
    <name type="common">Green alga</name>
    <dbReference type="NCBI Taxonomy" id="31312"/>
    <lineage>
        <taxon>Eukaryota</taxon>
        <taxon>Viridiplantae</taxon>
        <taxon>Chlorophyta</taxon>
        <taxon>Nephroselmidophyceae</taxon>
        <taxon>Nephroselmidales</taxon>
        <taxon>Nephroselmidaceae</taxon>
        <taxon>Nephroselmis</taxon>
    </lineage>
</organism>
<comment type="function">
    <text evidence="1">Essential for the assembly of the photosystem I (PSI) complex. May act as a chaperone-like factor to guide the assembly of the PSI subunits.</text>
</comment>
<comment type="subcellular location">
    <subcellularLocation>
        <location evidence="1">Plastid</location>
        <location evidence="1">Chloroplast thylakoid membrane</location>
        <topology evidence="1">Peripheral membrane protein</topology>
    </subcellularLocation>
</comment>
<comment type="similarity">
    <text evidence="1">Belongs to the Ycf3 family.</text>
</comment>
<gene>
    <name evidence="1" type="primary">ycf3</name>
</gene>
<evidence type="ECO:0000255" key="1">
    <source>
        <dbReference type="HAMAP-Rule" id="MF_00439"/>
    </source>
</evidence>
<sequence length="171" mass="19978">MPRSQRNDNFIDKTFTVVADILLKVLPTTRREKEAFTYYRDGMSAQAEGEYAEALQNYYEAMRLEVDAYDRSYILYNIGLIHTSNGEHAKALEYYYQALERNPYLPQALNNIAVIYHYRGEQAIESGNSRISNLLFDKAADYWKEAIRLAPTNYIEAQNWLKITNRLEEAI</sequence>
<reference key="1">
    <citation type="journal article" date="1999" name="Proc. Natl. Acad. Sci. U.S.A.">
        <title>The complete chloroplast DNA sequence of the green alga Nephroselmis olivacea: insights into the architecture of ancestral chloroplast genomes.</title>
        <authorList>
            <person name="Turmel M."/>
            <person name="Otis C."/>
            <person name="Lemieux C."/>
        </authorList>
    </citation>
    <scope>NUCLEOTIDE SEQUENCE [LARGE SCALE GENOMIC DNA]</scope>
    <source>
        <strain>NIES-484 / S-N-5-8</strain>
    </source>
</reference>
<feature type="chain" id="PRO_0000217810" description="Photosystem I assembly protein Ycf3">
    <location>
        <begin position="1"/>
        <end position="171"/>
    </location>
</feature>
<feature type="repeat" description="TPR 1">
    <location>
        <begin position="35"/>
        <end position="68"/>
    </location>
</feature>
<feature type="repeat" description="TPR 2">
    <location>
        <begin position="72"/>
        <end position="105"/>
    </location>
</feature>
<feature type="repeat" description="TPR 3">
    <location>
        <begin position="120"/>
        <end position="153"/>
    </location>
</feature>
<dbReference type="EMBL" id="AF137379">
    <property type="protein sequence ID" value="AAD54814.1"/>
    <property type="molecule type" value="Genomic_DNA"/>
</dbReference>
<dbReference type="RefSeq" id="NP_050843.1">
    <property type="nucleotide sequence ID" value="NC_000927.1"/>
</dbReference>
<dbReference type="SMR" id="Q9TL02"/>
<dbReference type="GeneID" id="801939"/>
<dbReference type="GO" id="GO:0009535">
    <property type="term" value="C:chloroplast thylakoid membrane"/>
    <property type="evidence" value="ECO:0007669"/>
    <property type="project" value="UniProtKB-SubCell"/>
</dbReference>
<dbReference type="GO" id="GO:0015979">
    <property type="term" value="P:photosynthesis"/>
    <property type="evidence" value="ECO:0007669"/>
    <property type="project" value="UniProtKB-UniRule"/>
</dbReference>
<dbReference type="FunFam" id="1.25.40.10:FF:000004">
    <property type="entry name" value="Photosystem I assembly protein Ycf3"/>
    <property type="match status" value="1"/>
</dbReference>
<dbReference type="Gene3D" id="1.25.40.10">
    <property type="entry name" value="Tetratricopeptide repeat domain"/>
    <property type="match status" value="1"/>
</dbReference>
<dbReference type="HAMAP" id="MF_00439">
    <property type="entry name" value="Ycf3"/>
    <property type="match status" value="1"/>
</dbReference>
<dbReference type="InterPro" id="IPR022818">
    <property type="entry name" value="PSI_Ycf3_assembly"/>
</dbReference>
<dbReference type="InterPro" id="IPR011990">
    <property type="entry name" value="TPR-like_helical_dom_sf"/>
</dbReference>
<dbReference type="InterPro" id="IPR019734">
    <property type="entry name" value="TPR_rpt"/>
</dbReference>
<dbReference type="NCBIfam" id="NF002725">
    <property type="entry name" value="PRK02603.1"/>
    <property type="match status" value="1"/>
</dbReference>
<dbReference type="Pfam" id="PF00515">
    <property type="entry name" value="TPR_1"/>
    <property type="match status" value="1"/>
</dbReference>
<dbReference type="SMART" id="SM00028">
    <property type="entry name" value="TPR"/>
    <property type="match status" value="3"/>
</dbReference>
<dbReference type="SUPFAM" id="SSF48452">
    <property type="entry name" value="TPR-like"/>
    <property type="match status" value="1"/>
</dbReference>
<dbReference type="PROSITE" id="PS50005">
    <property type="entry name" value="TPR"/>
    <property type="match status" value="3"/>
</dbReference>
<dbReference type="PROSITE" id="PS50293">
    <property type="entry name" value="TPR_REGION"/>
    <property type="match status" value="1"/>
</dbReference>
<name>YCF3_NEPOL</name>
<protein>
    <recommendedName>
        <fullName evidence="1">Photosystem I assembly protein Ycf3</fullName>
        <shortName>RF3</shortName>
    </recommendedName>
</protein>